<proteinExistence type="evidence at protein level"/>
<dbReference type="EMBL" id="AE017354">
    <property type="protein sequence ID" value="AAU28406.1"/>
    <property type="molecule type" value="Genomic_DNA"/>
</dbReference>
<dbReference type="RefSeq" id="YP_096353.1">
    <property type="nucleotide sequence ID" value="NC_002942.5"/>
</dbReference>
<dbReference type="PDB" id="6PIR">
    <property type="method" value="X-ray"/>
    <property type="resolution" value="1.65 A"/>
    <property type="chains" value="A/B/C=39-172"/>
</dbReference>
<dbReference type="PDBsum" id="6PIR"/>
<dbReference type="SMR" id="Q5ZT21"/>
<dbReference type="PaxDb" id="272624-lpg2344"/>
<dbReference type="KEGG" id="lpn:lpg2344"/>
<dbReference type="PATRIC" id="fig|272624.6.peg.2462"/>
<dbReference type="eggNOG" id="ENOG5030QDH">
    <property type="taxonomic scope" value="Bacteria"/>
</dbReference>
<dbReference type="HOGENOM" id="CLU_1561027_0_0_6"/>
<dbReference type="OrthoDB" id="5653982at2"/>
<dbReference type="PHI-base" id="PHI:11242"/>
<dbReference type="Proteomes" id="UP000000609">
    <property type="component" value="Chromosome"/>
</dbReference>
<dbReference type="GO" id="GO:0005576">
    <property type="term" value="C:extracellular region"/>
    <property type="evidence" value="ECO:0007669"/>
    <property type="project" value="UniProtKB-SubCell"/>
</dbReference>
<dbReference type="GO" id="GO:0033644">
    <property type="term" value="C:host cell membrane"/>
    <property type="evidence" value="ECO:0007669"/>
    <property type="project" value="UniProtKB-KW"/>
</dbReference>
<dbReference type="GO" id="GO:0140221">
    <property type="term" value="C:pathogen-containing vacuole membrane"/>
    <property type="evidence" value="ECO:0007669"/>
    <property type="project" value="UniProtKB-SubCell"/>
</dbReference>
<dbReference type="CDD" id="cd21821">
    <property type="entry name" value="MavE"/>
    <property type="match status" value="1"/>
</dbReference>
<reference key="1">
    <citation type="journal article" date="2004" name="Science">
        <title>The genomic sequence of the accidental pathogen Legionella pneumophila.</title>
        <authorList>
            <person name="Chien M."/>
            <person name="Morozova I."/>
            <person name="Shi S."/>
            <person name="Sheng H."/>
            <person name="Chen J."/>
            <person name="Gomez S.M."/>
            <person name="Asamani G."/>
            <person name="Hill K."/>
            <person name="Nuara J."/>
            <person name="Feder M."/>
            <person name="Rineer J."/>
            <person name="Greenberg J.J."/>
            <person name="Steshenko V."/>
            <person name="Park S.H."/>
            <person name="Zhao B."/>
            <person name="Teplitskaya E."/>
            <person name="Edwards J.R."/>
            <person name="Pampou S."/>
            <person name="Georghiou A."/>
            <person name="Chou I.-C."/>
            <person name="Iannuccilli W."/>
            <person name="Ulz M.E."/>
            <person name="Kim D.H."/>
            <person name="Geringer-Sameth A."/>
            <person name="Goldsberry C."/>
            <person name="Morozov P."/>
            <person name="Fischer S.G."/>
            <person name="Segal G."/>
            <person name="Qu X."/>
            <person name="Rzhetsky A."/>
            <person name="Zhang P."/>
            <person name="Cayanis E."/>
            <person name="De Jong P.J."/>
            <person name="Ju J."/>
            <person name="Kalachikov S."/>
            <person name="Shuman H.A."/>
            <person name="Russo J.J."/>
        </authorList>
    </citation>
    <scope>NUCLEOTIDE SEQUENCE [LARGE SCALE GENOMIC DNA]</scope>
    <source>
        <strain>Philadelphia 1 / ATCC 33152 / DSM 7513</strain>
    </source>
</reference>
<reference evidence="7" key="2">
    <citation type="journal article" date="2021" name="MBio">
        <title>An indispensable role for the MavE effector of Legionella pneumophila in lysosomal evasion.</title>
        <authorList>
            <person name="Vaughn B."/>
            <person name="Voth K."/>
            <person name="Price C.T."/>
            <person name="Jones S."/>
            <person name="Ozanic M."/>
            <person name="Santic M."/>
            <person name="Cygler M."/>
            <person name="Abu Kwaik Y."/>
        </authorList>
    </citation>
    <scope>X-RAY CRYSTALLOGRAPHY (1.65 ANGSTROMS) OF 39-172</scope>
    <scope>FUNCTION</scope>
    <scope>SUBUNIT</scope>
    <scope>SUBCELLULAR LOCATION</scope>
    <scope>DOMAIN</scope>
    <scope>DISRUPTION PHENOTYPE</scope>
    <scope>MUTAGENESIS OF ASP-64; HIS-68; ASN-77; PRO-78; TYR-80 AND SER-102</scope>
    <source>
        <strain>AA100 / Serogroup 1</strain>
        <strain>Philadelphia 1 / ATCC 33152 / DSM 7513</strain>
    </source>
</reference>
<protein>
    <recommendedName>
        <fullName evidence="4">Effector protein MavE</fullName>
    </recommendedName>
</protein>
<gene>
    <name evidence="3" type="primary">mavE</name>
    <name evidence="6" type="ordered locus">lpg2344</name>
</gene>
<accession>Q5ZT21</accession>
<feature type="chain" id="PRO_0000456174" description="Effector protein MavE">
    <location>
        <begin position="1"/>
        <end position="208"/>
    </location>
</feature>
<feature type="transmembrane region" description="Helical" evidence="1">
    <location>
        <begin position="184"/>
        <end position="204"/>
    </location>
</feature>
<feature type="short sequence motif" description="NPxY eukaryotic motif" evidence="5">
    <location>
        <begin position="77"/>
        <end position="80"/>
    </location>
</feature>
<feature type="mutagenesis site" description="Results in attenuation of L.pneumophila in both hMDMs and amoeba. Vacuoles cannot be remodeled by the ER and are fused to the lysosomes, leading to bacterial degradation." evidence="2">
    <original>D</original>
    <variation>A</variation>
    <location>
        <position position="64"/>
    </location>
</feature>
<feature type="mutagenesis site" description="Results in attenuation of L.pneumophila in amoeba." evidence="2">
    <original>H</original>
    <variation>A</variation>
    <location>
        <position position="68"/>
    </location>
</feature>
<feature type="mutagenesis site" description="Does not significantly impede L.pneumophila replication within hMDMs." evidence="2">
    <original>N</original>
    <variation>A</variation>
    <location>
        <position position="77"/>
    </location>
</feature>
<feature type="mutagenesis site" description="Results in attenuation of L.pneumophila in both hMDMs and amoeba. Vacuoles cannot be remodeled by the ER and are fused to the lysosomes, leading to bacterial degradation." evidence="2">
    <original>P</original>
    <variation>A</variation>
    <location>
        <position position="78"/>
    </location>
</feature>
<feature type="mutagenesis site" description="Does not significantly impede L.pneumophila replication within hMDMs." evidence="2">
    <original>Y</original>
    <variation>A</variation>
    <location>
        <position position="80"/>
    </location>
</feature>
<feature type="mutagenesis site" description="Does not show attenuation." evidence="2">
    <original>S</original>
    <variation>A</variation>
    <location>
        <position position="102"/>
    </location>
</feature>
<feature type="helix" evidence="8">
    <location>
        <begin position="40"/>
        <end position="56"/>
    </location>
</feature>
<feature type="helix" evidence="8">
    <location>
        <begin position="61"/>
        <end position="71"/>
    </location>
</feature>
<feature type="strand" evidence="8">
    <location>
        <begin position="74"/>
        <end position="76"/>
    </location>
</feature>
<feature type="helix" evidence="8">
    <location>
        <begin position="83"/>
        <end position="85"/>
    </location>
</feature>
<feature type="helix" evidence="8">
    <location>
        <begin position="89"/>
        <end position="91"/>
    </location>
</feature>
<feature type="helix" evidence="8">
    <location>
        <begin position="94"/>
        <end position="112"/>
    </location>
</feature>
<feature type="helix" evidence="8">
    <location>
        <begin position="120"/>
        <end position="141"/>
    </location>
</feature>
<feature type="turn" evidence="8">
    <location>
        <begin position="142"/>
        <end position="144"/>
    </location>
</feature>
<feature type="helix" evidence="8">
    <location>
        <begin position="150"/>
        <end position="169"/>
    </location>
</feature>
<comment type="function">
    <text evidence="2">Virulence effector that is indispensable for endoplasmic reticulum (ER)-mediated remodeling of the Legionella pneumophila-containing vacuole (LCV) and lysosomal evasion (PubMed:33563829). Essential for intracellular replication in human monocyte-derived macrophages (hMDMs) and amoebae, as well as for intrapulmonary proliferation in mice (PubMed:33563829).</text>
</comment>
<comment type="subunit">
    <text evidence="2">Homotrimer.</text>
</comment>
<comment type="subcellular location">
    <subcellularLocation>
        <location evidence="2">Secreted</location>
    </subcellularLocation>
    <subcellularLocation>
        <location evidence="2">Host vacuole</location>
        <location evidence="2">Host pathogen-containing vacuole</location>
        <location evidence="2">Host pathogen-containing vacuole membrane</location>
        <topology evidence="1">Single-pass membrane protein</topology>
    </subcellularLocation>
    <text evidence="2 5">Translocated into the host cell via the type IV secretion system (T4SS) (Probable). During infection, localizes to the poles of the LCV membrane (PubMed:33563829).</text>
</comment>
<comment type="domain">
    <text evidence="2">Contains a C-terminal transmembrane helix, three copies of tyrosine-based sorting motifs, and an NPxY eukaryotic motif, which binds phosphotyrosine-binding domains present on signaling and adapter eukaryotic proteins (PubMed:33563829). The NPxY eukaryotic motif is essential for ER-mediated remodeling and lysosomal evasion by the LCV (PubMed:33563829).</text>
</comment>
<comment type="disruption phenotype">
    <text evidence="2">The null mutant fails to remodel the LCV with endoplasmic reticulum (ER)-derived vesicles and is trafficked to the lysosomes where it is degraded (PubMed:33563829). Mutant is defective for intracellular growth in hMDMs, amoeba and for intrapulmonary proliferation in mice (PubMed:33563829).</text>
</comment>
<organism>
    <name type="scientific">Legionella pneumophila subsp. pneumophila (strain Philadelphia 1 / ATCC 33152 / DSM 7513)</name>
    <dbReference type="NCBI Taxonomy" id="272624"/>
    <lineage>
        <taxon>Bacteria</taxon>
        <taxon>Pseudomonadati</taxon>
        <taxon>Pseudomonadota</taxon>
        <taxon>Gammaproteobacteria</taxon>
        <taxon>Legionellales</taxon>
        <taxon>Legionellaceae</taxon>
        <taxon>Legionella</taxon>
    </lineage>
</organism>
<evidence type="ECO:0000255" key="1"/>
<evidence type="ECO:0000269" key="2">
    <source>
    </source>
</evidence>
<evidence type="ECO:0000303" key="3">
    <source>
    </source>
</evidence>
<evidence type="ECO:0000305" key="4"/>
<evidence type="ECO:0000305" key="5">
    <source>
    </source>
</evidence>
<evidence type="ECO:0000312" key="6">
    <source>
        <dbReference type="EMBL" id="AAU28406.1"/>
    </source>
</evidence>
<evidence type="ECO:0007744" key="7">
    <source>
        <dbReference type="PDB" id="6PIR"/>
    </source>
</evidence>
<evidence type="ECO:0007829" key="8">
    <source>
        <dbReference type="PDB" id="6PIR"/>
    </source>
</evidence>
<sequence length="208" mass="23928">MTRFIMLSFVTGYRKSISCNRFSRNVVSPYFFMRTIIMTRFERNFLINSLMFLETILSVDKKLDDAIHHFTQGQYENPRYQINSRITNADDWSKEDKLKFTSAIAEAIALVSEKYENPTSETTEQIQSARNILLDNYVPLLTANTDPENRLKSVRENSSQIRKELIAKLKDEVPYKSQFENPYVLFPFVAATVAVAATAASVLFGNKP</sequence>
<name>MAVE_LEGPH</name>
<keyword id="KW-0002">3D-structure</keyword>
<keyword id="KW-1043">Host membrane</keyword>
<keyword id="KW-0472">Membrane</keyword>
<keyword id="KW-1185">Reference proteome</keyword>
<keyword id="KW-0964">Secreted</keyword>
<keyword id="KW-0812">Transmembrane</keyword>
<keyword id="KW-1133">Transmembrane helix</keyword>
<keyword id="KW-0843">Virulence</keyword>